<comment type="function">
    <text evidence="1">May play a key role in the regulation of the intracellular concentration of adenosylhomocysteine.</text>
</comment>
<comment type="catalytic activity">
    <reaction evidence="1">
        <text>S-adenosyl-L-homocysteine + H2O = L-homocysteine + adenosine</text>
        <dbReference type="Rhea" id="RHEA:21708"/>
        <dbReference type="ChEBI" id="CHEBI:15377"/>
        <dbReference type="ChEBI" id="CHEBI:16335"/>
        <dbReference type="ChEBI" id="CHEBI:57856"/>
        <dbReference type="ChEBI" id="CHEBI:58199"/>
        <dbReference type="EC" id="3.13.2.1"/>
    </reaction>
</comment>
<comment type="cofactor">
    <cofactor evidence="1">
        <name>NAD(+)</name>
        <dbReference type="ChEBI" id="CHEBI:57540"/>
    </cofactor>
    <text evidence="1">Binds 1 NAD(+) per subunit.</text>
</comment>
<comment type="pathway">
    <text evidence="1">Amino-acid biosynthesis; L-homocysteine biosynthesis; L-homocysteine from S-adenosyl-L-homocysteine: step 1/1.</text>
</comment>
<comment type="subcellular location">
    <subcellularLocation>
        <location evidence="1">Cytoplasm</location>
    </subcellularLocation>
</comment>
<comment type="similarity">
    <text evidence="1">Belongs to the adenosylhomocysteinase family.</text>
</comment>
<evidence type="ECO:0000255" key="1">
    <source>
        <dbReference type="HAMAP-Rule" id="MF_00563"/>
    </source>
</evidence>
<feature type="chain" id="PRO_1000024735" description="Adenosylhomocysteinase">
    <location>
        <begin position="1"/>
        <end position="489"/>
    </location>
</feature>
<feature type="binding site" evidence="1">
    <location>
        <position position="68"/>
    </location>
    <ligand>
        <name>substrate</name>
    </ligand>
</feature>
<feature type="binding site" evidence="1">
    <location>
        <position position="151"/>
    </location>
    <ligand>
        <name>substrate</name>
    </ligand>
</feature>
<feature type="binding site" evidence="1">
    <location>
        <position position="213"/>
    </location>
    <ligand>
        <name>substrate</name>
    </ligand>
</feature>
<feature type="binding site" evidence="1">
    <location>
        <begin position="214"/>
        <end position="216"/>
    </location>
    <ligand>
        <name>NAD(+)</name>
        <dbReference type="ChEBI" id="CHEBI:57540"/>
    </ligand>
</feature>
<feature type="binding site" evidence="1">
    <location>
        <position position="243"/>
    </location>
    <ligand>
        <name>substrate</name>
    </ligand>
</feature>
<feature type="binding site" evidence="1">
    <location>
        <position position="247"/>
    </location>
    <ligand>
        <name>substrate</name>
    </ligand>
</feature>
<feature type="binding site" evidence="1">
    <location>
        <position position="248"/>
    </location>
    <ligand>
        <name>NAD(+)</name>
        <dbReference type="ChEBI" id="CHEBI:57540"/>
    </ligand>
</feature>
<feature type="binding site" evidence="1">
    <location>
        <begin position="277"/>
        <end position="282"/>
    </location>
    <ligand>
        <name>NAD(+)</name>
        <dbReference type="ChEBI" id="CHEBI:57540"/>
    </ligand>
</feature>
<feature type="binding site" evidence="1">
    <location>
        <position position="300"/>
    </location>
    <ligand>
        <name>NAD(+)</name>
        <dbReference type="ChEBI" id="CHEBI:57540"/>
    </ligand>
</feature>
<feature type="binding site" evidence="1">
    <location>
        <position position="335"/>
    </location>
    <ligand>
        <name>NAD(+)</name>
        <dbReference type="ChEBI" id="CHEBI:57540"/>
    </ligand>
</feature>
<feature type="binding site" evidence="1">
    <location>
        <begin position="356"/>
        <end position="358"/>
    </location>
    <ligand>
        <name>NAD(+)</name>
        <dbReference type="ChEBI" id="CHEBI:57540"/>
    </ligand>
</feature>
<feature type="binding site" evidence="1">
    <location>
        <position position="403"/>
    </location>
    <ligand>
        <name>NAD(+)</name>
        <dbReference type="ChEBI" id="CHEBI:57540"/>
    </ligand>
</feature>
<sequence length="489" mass="53727">MTTTEQRLTVESRNGIDYKVADLSLAEFGRKEIRLAEHEMPGLMALRREYAEVAPLKGARISGSLHMTVQTAVLIETLVSLGAEVRWASCNIFSTQDHAAAAVVVGPHGTPEEPKGTPVFAWKGETLEEYWWAAEQMLTWPGEPANMILDDGGDATMLVLRGAQFEKAGVVPPAEDDDSAEYKVFLNLLRERFETDKTKWTKIAESVKGVTEETTTGVLRLYQFEAAGELPFPAINVNDSVTKSKFDNKYGTRHSLIDGINRGTDVLIGGKKVLICGYGDVGKGCAESLAGQGARVQVTEIDPINALQALMDGFDVVTVEQAIGSADIVITSTGNKDIITLDHMKAMKDKAILGNIGHFDNEIDMAALERSGATRINIKPQVDEWTFDDGHSIVLLSEGRLLNLGNATGHPSFVMSNSFSNQVIAQIELWTKNDEYDNAVYRLAKHLDEKVARIHVEALGGTLTKLTKEQAEYINVDVEGPYKPEHYRY</sequence>
<organism>
    <name type="scientific">Mycobacterium sp. (strain MCS)</name>
    <dbReference type="NCBI Taxonomy" id="164756"/>
    <lineage>
        <taxon>Bacteria</taxon>
        <taxon>Bacillati</taxon>
        <taxon>Actinomycetota</taxon>
        <taxon>Actinomycetes</taxon>
        <taxon>Mycobacteriales</taxon>
        <taxon>Mycobacteriaceae</taxon>
        <taxon>Mycobacterium</taxon>
    </lineage>
</organism>
<keyword id="KW-0963">Cytoplasm</keyword>
<keyword id="KW-0378">Hydrolase</keyword>
<keyword id="KW-0520">NAD</keyword>
<keyword id="KW-0554">One-carbon metabolism</keyword>
<gene>
    <name evidence="1" type="primary">ahcY</name>
    <name type="ordered locus">Mmcs_1336</name>
</gene>
<accession>Q1BCD6</accession>
<protein>
    <recommendedName>
        <fullName evidence="1">Adenosylhomocysteinase</fullName>
        <ecNumber evidence="1">3.13.2.1</ecNumber>
    </recommendedName>
    <alternativeName>
        <fullName evidence="1">S-adenosyl-L-homocysteine hydrolase</fullName>
        <shortName evidence="1">AdoHcyase</shortName>
    </alternativeName>
</protein>
<proteinExistence type="inferred from homology"/>
<dbReference type="EC" id="3.13.2.1" evidence="1"/>
<dbReference type="EMBL" id="CP000384">
    <property type="protein sequence ID" value="ABG07448.1"/>
    <property type="molecule type" value="Genomic_DNA"/>
</dbReference>
<dbReference type="SMR" id="Q1BCD6"/>
<dbReference type="KEGG" id="mmc:Mmcs_1336"/>
<dbReference type="HOGENOM" id="CLU_025194_2_1_11"/>
<dbReference type="BioCyc" id="MSP164756:G1G6O-1364-MONOMER"/>
<dbReference type="UniPathway" id="UPA00314">
    <property type="reaction ID" value="UER00076"/>
</dbReference>
<dbReference type="GO" id="GO:0005829">
    <property type="term" value="C:cytosol"/>
    <property type="evidence" value="ECO:0007669"/>
    <property type="project" value="TreeGrafter"/>
</dbReference>
<dbReference type="GO" id="GO:0004013">
    <property type="term" value="F:adenosylhomocysteinase activity"/>
    <property type="evidence" value="ECO:0007669"/>
    <property type="project" value="UniProtKB-UniRule"/>
</dbReference>
<dbReference type="GO" id="GO:0071269">
    <property type="term" value="P:L-homocysteine biosynthetic process"/>
    <property type="evidence" value="ECO:0007669"/>
    <property type="project" value="UniProtKB-UniRule"/>
</dbReference>
<dbReference type="GO" id="GO:0006730">
    <property type="term" value="P:one-carbon metabolic process"/>
    <property type="evidence" value="ECO:0007669"/>
    <property type="project" value="UniProtKB-KW"/>
</dbReference>
<dbReference type="GO" id="GO:0033353">
    <property type="term" value="P:S-adenosylmethionine cycle"/>
    <property type="evidence" value="ECO:0007669"/>
    <property type="project" value="TreeGrafter"/>
</dbReference>
<dbReference type="CDD" id="cd00401">
    <property type="entry name" value="SAHH"/>
    <property type="match status" value="1"/>
</dbReference>
<dbReference type="FunFam" id="3.40.50.720:FF:000004">
    <property type="entry name" value="Adenosylhomocysteinase"/>
    <property type="match status" value="1"/>
</dbReference>
<dbReference type="Gene3D" id="3.40.50.1480">
    <property type="entry name" value="Adenosylhomocysteinase-like"/>
    <property type="match status" value="1"/>
</dbReference>
<dbReference type="Gene3D" id="3.40.50.720">
    <property type="entry name" value="NAD(P)-binding Rossmann-like Domain"/>
    <property type="match status" value="1"/>
</dbReference>
<dbReference type="HAMAP" id="MF_00563">
    <property type="entry name" value="AdoHcyase"/>
    <property type="match status" value="1"/>
</dbReference>
<dbReference type="InterPro" id="IPR042172">
    <property type="entry name" value="Adenosylhomocyst_ase-like_sf"/>
</dbReference>
<dbReference type="InterPro" id="IPR000043">
    <property type="entry name" value="Adenosylhomocysteinase-like"/>
</dbReference>
<dbReference type="InterPro" id="IPR015878">
    <property type="entry name" value="Ado_hCys_hydrolase_NAD-bd"/>
</dbReference>
<dbReference type="InterPro" id="IPR036291">
    <property type="entry name" value="NAD(P)-bd_dom_sf"/>
</dbReference>
<dbReference type="InterPro" id="IPR020082">
    <property type="entry name" value="S-Ado-L-homoCys_hydrolase_CS"/>
</dbReference>
<dbReference type="NCBIfam" id="TIGR00936">
    <property type="entry name" value="ahcY"/>
    <property type="match status" value="1"/>
</dbReference>
<dbReference type="NCBIfam" id="NF004005">
    <property type="entry name" value="PRK05476.2-3"/>
    <property type="match status" value="1"/>
</dbReference>
<dbReference type="PANTHER" id="PTHR23420">
    <property type="entry name" value="ADENOSYLHOMOCYSTEINASE"/>
    <property type="match status" value="1"/>
</dbReference>
<dbReference type="PANTHER" id="PTHR23420:SF0">
    <property type="entry name" value="ADENOSYLHOMOCYSTEINASE"/>
    <property type="match status" value="1"/>
</dbReference>
<dbReference type="Pfam" id="PF05221">
    <property type="entry name" value="AdoHcyase"/>
    <property type="match status" value="1"/>
</dbReference>
<dbReference type="Pfam" id="PF00670">
    <property type="entry name" value="AdoHcyase_NAD"/>
    <property type="match status" value="1"/>
</dbReference>
<dbReference type="PIRSF" id="PIRSF001109">
    <property type="entry name" value="Ad_hcy_hydrolase"/>
    <property type="match status" value="1"/>
</dbReference>
<dbReference type="SMART" id="SM00996">
    <property type="entry name" value="AdoHcyase"/>
    <property type="match status" value="1"/>
</dbReference>
<dbReference type="SMART" id="SM00997">
    <property type="entry name" value="AdoHcyase_NAD"/>
    <property type="match status" value="1"/>
</dbReference>
<dbReference type="SUPFAM" id="SSF52283">
    <property type="entry name" value="Formate/glycerate dehydrogenase catalytic domain-like"/>
    <property type="match status" value="1"/>
</dbReference>
<dbReference type="SUPFAM" id="SSF51735">
    <property type="entry name" value="NAD(P)-binding Rossmann-fold domains"/>
    <property type="match status" value="1"/>
</dbReference>
<dbReference type="PROSITE" id="PS00738">
    <property type="entry name" value="ADOHCYASE_1"/>
    <property type="match status" value="1"/>
</dbReference>
<dbReference type="PROSITE" id="PS00739">
    <property type="entry name" value="ADOHCYASE_2"/>
    <property type="match status" value="1"/>
</dbReference>
<name>SAHH_MYCSS</name>
<reference key="1">
    <citation type="submission" date="2006-06" db="EMBL/GenBank/DDBJ databases">
        <title>Complete sequence of chromosome of Mycobacterium sp. MCS.</title>
        <authorList>
            <consortium name="US DOE Joint Genome Institute"/>
            <person name="Copeland A."/>
            <person name="Lucas S."/>
            <person name="Lapidus A."/>
            <person name="Barry K."/>
            <person name="Detter J.C."/>
            <person name="Glavina del Rio T."/>
            <person name="Hammon N."/>
            <person name="Israni S."/>
            <person name="Dalin E."/>
            <person name="Tice H."/>
            <person name="Pitluck S."/>
            <person name="Martinez M."/>
            <person name="Schmutz J."/>
            <person name="Larimer F."/>
            <person name="Land M."/>
            <person name="Hauser L."/>
            <person name="Kyrpides N."/>
            <person name="Kim E."/>
            <person name="Miller C.D."/>
            <person name="Hughes J.E."/>
            <person name="Anderson A.J."/>
            <person name="Sims R.C."/>
            <person name="Richardson P."/>
        </authorList>
    </citation>
    <scope>NUCLEOTIDE SEQUENCE [LARGE SCALE GENOMIC DNA]</scope>
    <source>
        <strain>MCS</strain>
    </source>
</reference>